<comment type="function">
    <text evidence="1 4 5">Component of ribonuclease P, a protein complex that generates mature tRNA molecules by cleaving their 5'-ends (PubMed:11413139, PubMed:30454648). Also a component of the MRP ribonuclease complex, which cleaves pre-rRNA sequences (PubMed:28115465).</text>
</comment>
<comment type="subunit">
    <text evidence="1 2 3 5">Component of nuclear RNase P and RNase MRP ribonucleoproteins (PubMed:11413139, PubMed:15096576, PubMed:16723659, PubMed:30454648). RNase P consists of a catalytic RNA moiety and 10 different protein chains; POP1, POP4, POP5, POP7, RPP14, RPP21, RPP25, RPP30, RPP38 and RPP40 (PubMed:11413139, PubMed:15096576, PubMed:16723659, PubMed:30454648). Within the RNase P complex, POP1, POP7 and RPP25 form the 'finger' subcomplex, POP5, RPP14, RPP40 and homodimeric RPP30 form the 'palm' subcomplex, and RPP21, POP4 and RPP38 form the 'wrist' subcomplex. All subunits of the RNase P complex interact with the catalytic RNA (PubMed:30454648). Several subunits of RNase P are also part of the RNase MRP complex. RNase MRP consists of a catalytic RNA moiety and about 8 protein subunits; POP1, POP7, RPP25, RPP30, RPP38, RPP40 and possibly also POP4 and POP5 (PubMed:11413139, PubMed:15096576, PubMed:16723659).</text>
</comment>
<comment type="interaction">
    <interactant intactId="EBI-366525">
        <id>Q969H6</id>
    </interactant>
    <interactant intactId="EBI-1058722">
        <id>Q13554</id>
        <label>CAMK2B</label>
    </interactant>
    <organismsDiffer>false</organismsDiffer>
    <experiments>3</experiments>
</comment>
<comment type="interaction">
    <interactant intactId="EBI-366525">
        <id>Q969H6</id>
    </interactant>
    <interactant intactId="EBI-10171570">
        <id>Q68D86</id>
        <label>CCDC102B</label>
    </interactant>
    <organismsDiffer>false</organismsDiffer>
    <experiments>6</experiments>
</comment>
<comment type="interaction">
    <interactant intactId="EBI-366525">
        <id>Q969H6</id>
    </interactant>
    <interactant intactId="EBI-744115">
        <id>Q9C0F1</id>
        <label>CEP44</label>
    </interactant>
    <organismsDiffer>false</organismsDiffer>
    <experiments>6</experiments>
</comment>
<comment type="interaction">
    <interactant intactId="EBI-366525">
        <id>Q969H6</id>
    </interactant>
    <interactant intactId="EBI-10303987">
        <id>Q9UHG0</id>
        <label>DCDC2</label>
    </interactant>
    <organismsDiffer>false</organismsDiffer>
    <experiments>3</experiments>
</comment>
<comment type="interaction">
    <interactant intactId="EBI-366525">
        <id>Q969H6</id>
    </interactant>
    <interactant intactId="EBI-6509505">
        <id>Q0VD86</id>
        <label>INCA1</label>
    </interactant>
    <organismsDiffer>false</organismsDiffer>
    <experiments>3</experiments>
</comment>
<comment type="interaction">
    <interactant intactId="EBI-366525">
        <id>Q969H6</id>
    </interactant>
    <interactant intactId="EBI-1047093">
        <id>O76011</id>
        <label>KRT34</label>
    </interactant>
    <organismsDiffer>false</organismsDiffer>
    <experiments>3</experiments>
</comment>
<comment type="interaction">
    <interactant intactId="EBI-366525">
        <id>Q969H6</id>
    </interactant>
    <interactant intactId="EBI-10171697">
        <id>Q6A162</id>
        <label>KRT40</label>
    </interactant>
    <organismsDiffer>false</organismsDiffer>
    <experiments>3</experiments>
</comment>
<comment type="interaction">
    <interactant intactId="EBI-366525">
        <id>Q969H6</id>
    </interactant>
    <interactant intactId="EBI-1246261">
        <id>O14561</id>
        <label>NDUFAB1</label>
    </interactant>
    <organismsDiffer>false</organismsDiffer>
    <experiments>3</experiments>
</comment>
<comment type="interaction">
    <interactant intactId="EBI-366525">
        <id>Q969H6</id>
    </interactant>
    <interactant intactId="EBI-366741">
        <id>Q99575</id>
        <label>POP1</label>
    </interactant>
    <organismsDiffer>false</organismsDiffer>
    <experiments>3</experiments>
</comment>
<comment type="interaction">
    <interactant intactId="EBI-366525">
        <id>Q969H6</id>
    </interactant>
    <interactant intactId="EBI-366477">
        <id>O95707</id>
        <label>POP4</label>
    </interactant>
    <organismsDiffer>false</organismsDiffer>
    <experiments>5</experiments>
</comment>
<comment type="interaction">
    <interactant intactId="EBI-366525">
        <id>Q969H6</id>
    </interactant>
    <interactant intactId="EBI-307352">
        <id>Q04864</id>
        <label>REL</label>
    </interactant>
    <organismsDiffer>false</organismsDiffer>
    <experiments>3</experiments>
</comment>
<comment type="interaction">
    <interactant intactId="EBI-366525">
        <id>Q969H6</id>
    </interactant>
    <interactant intactId="EBI-366542">
        <id>O95059</id>
        <label>RPP14</label>
    </interactant>
    <organismsDiffer>false</organismsDiffer>
    <experiments>3</experiments>
</comment>
<comment type="interaction">
    <interactant intactId="EBI-366525">
        <id>Q969H6</id>
    </interactant>
    <interactant intactId="EBI-366570">
        <id>Q9BUL9</id>
        <label>RPP25</label>
    </interactant>
    <organismsDiffer>false</organismsDiffer>
    <experiments>4</experiments>
</comment>
<comment type="interaction">
    <interactant intactId="EBI-366525">
        <id>Q969H6</id>
    </interactant>
    <interactant intactId="EBI-366553">
        <id>P78346</id>
        <label>RPP30</label>
    </interactant>
    <organismsDiffer>false</organismsDiffer>
    <experiments>9</experiments>
</comment>
<comment type="interaction">
    <interactant intactId="EBI-366525">
        <id>Q969H6</id>
    </interactant>
    <interactant intactId="EBI-359224">
        <id>Q13077</id>
        <label>TRAF1</label>
    </interactant>
    <organismsDiffer>false</organismsDiffer>
    <experiments>6</experiments>
</comment>
<comment type="interaction">
    <interactant intactId="EBI-366525">
        <id>Q969H6</id>
    </interactant>
    <interactant intactId="EBI-739895">
        <id>Q8N6Y0</id>
        <label>USHBP1</label>
    </interactant>
    <organismsDiffer>false</organismsDiffer>
    <experiments>3</experiments>
</comment>
<comment type="interaction">
    <interactant intactId="EBI-366525">
        <id>Q969H6</id>
    </interactant>
    <interactant intactId="EBI-9675698">
        <id>P14079</id>
        <label>tax</label>
    </interactant>
    <organismsDiffer>true</organismsDiffer>
    <experiments>3</experiments>
</comment>
<comment type="subcellular location">
    <subcellularLocation>
        <location evidence="1">Nucleus</location>
        <location evidence="1">Nucleolus</location>
    </subcellularLocation>
</comment>
<comment type="alternative products">
    <event type="alternative splicing"/>
    <isoform>
        <id>Q969H6-1</id>
        <name>1</name>
        <sequence type="displayed"/>
    </isoform>
    <isoform>
        <id>Q969H6-2</id>
        <name>2</name>
        <sequence type="described" ref="VSP_042733"/>
    </isoform>
</comment>
<comment type="miscellaneous">
    <text>The last C-terminal 19 amino acids are not required for complex association and RNase activity.</text>
</comment>
<comment type="similarity">
    <text evidence="7">Belongs to the eukaryotic/archaeal RNase P protein component 2 family.</text>
</comment>
<sequence length="163" mass="18820">MVRFKHRYLLCELVSDDPRCRLSLDDRVLSSLVRDTIARVHGTFGAAACSIGFAVRYLNAYTGIVLLRCRKEFYQLVWSALPFITYLENKGHRYPCFFNTLHVGGTIRTCQKFLIQYNRRQLLILLQNCTDEGEREAIQKSVTRSCLLEEEEESGEEAAEAME</sequence>
<proteinExistence type="evidence at protein level"/>
<organism>
    <name type="scientific">Homo sapiens</name>
    <name type="common">Human</name>
    <dbReference type="NCBI Taxonomy" id="9606"/>
    <lineage>
        <taxon>Eukaryota</taxon>
        <taxon>Metazoa</taxon>
        <taxon>Chordata</taxon>
        <taxon>Craniata</taxon>
        <taxon>Vertebrata</taxon>
        <taxon>Euteleostomi</taxon>
        <taxon>Mammalia</taxon>
        <taxon>Eutheria</taxon>
        <taxon>Euarchontoglires</taxon>
        <taxon>Primates</taxon>
        <taxon>Haplorrhini</taxon>
        <taxon>Catarrhini</taxon>
        <taxon>Hominidae</taxon>
        <taxon>Homo</taxon>
    </lineage>
</organism>
<gene>
    <name type="primary">POP5</name>
    <name type="ORF">AD-008</name>
    <name type="ORF">HSPC004</name>
    <name type="ORF">x0003</name>
</gene>
<dbReference type="EMBL" id="AJ306296">
    <property type="protein sequence ID" value="CAC59822.1"/>
    <property type="molecule type" value="mRNA"/>
</dbReference>
<dbReference type="EMBL" id="AF117232">
    <property type="protein sequence ID" value="AAF17213.1"/>
    <property type="molecule type" value="mRNA"/>
</dbReference>
<dbReference type="EMBL" id="AF070660">
    <property type="protein sequence ID" value="AAD20966.1"/>
    <property type="molecule type" value="mRNA"/>
</dbReference>
<dbReference type="EMBL" id="AK303144">
    <property type="protein sequence ID" value="BAG64248.1"/>
    <property type="molecule type" value="mRNA"/>
</dbReference>
<dbReference type="EMBL" id="AK223206">
    <property type="protein sequence ID" value="BAD96926.1"/>
    <property type="molecule type" value="mRNA"/>
</dbReference>
<dbReference type="EMBL" id="AC063943">
    <property type="status" value="NOT_ANNOTATED_CDS"/>
    <property type="molecule type" value="Genomic_DNA"/>
</dbReference>
<dbReference type="EMBL" id="CH471054">
    <property type="protein sequence ID" value="EAW98206.1"/>
    <property type="molecule type" value="Genomic_DNA"/>
</dbReference>
<dbReference type="EMBL" id="BC012505">
    <property type="protein sequence ID" value="AAH12505.1"/>
    <property type="molecule type" value="mRNA"/>
</dbReference>
<dbReference type="CCDS" id="CCDS9202.1">
    <molecule id="Q969H6-1"/>
</dbReference>
<dbReference type="CCDS" id="CCDS9203.1">
    <molecule id="Q969H6-2"/>
</dbReference>
<dbReference type="RefSeq" id="NP_057002.2">
    <molecule id="Q969H6-1"/>
    <property type="nucleotide sequence ID" value="NM_015918.3"/>
</dbReference>
<dbReference type="RefSeq" id="NP_937845.1">
    <molecule id="Q969H6-2"/>
    <property type="nucleotide sequence ID" value="NM_198202.2"/>
</dbReference>
<dbReference type="PDB" id="6AHR">
    <property type="method" value="EM"/>
    <property type="resolution" value="3.92 A"/>
    <property type="chains" value="E=1-163"/>
</dbReference>
<dbReference type="PDB" id="6AHU">
    <property type="method" value="EM"/>
    <property type="resolution" value="3.66 A"/>
    <property type="chains" value="E=1-163"/>
</dbReference>
<dbReference type="PDBsum" id="6AHR"/>
<dbReference type="PDBsum" id="6AHU"/>
<dbReference type="EMDB" id="EMD-9626"/>
<dbReference type="EMDB" id="EMD-9627"/>
<dbReference type="SMR" id="Q969H6"/>
<dbReference type="BioGRID" id="119502">
    <property type="interactions" value="41"/>
</dbReference>
<dbReference type="ComplexPortal" id="CPX-2876">
    <property type="entry name" value="Ribonuclease MRP complex"/>
</dbReference>
<dbReference type="ComplexPortal" id="CPX-2877">
    <property type="entry name" value="Nucleolar ribonuclease P complex"/>
</dbReference>
<dbReference type="CORUM" id="Q969H6"/>
<dbReference type="FunCoup" id="Q969H6">
    <property type="interactions" value="674"/>
</dbReference>
<dbReference type="IntAct" id="Q969H6">
    <property type="interactions" value="30"/>
</dbReference>
<dbReference type="MINT" id="Q969H6"/>
<dbReference type="STRING" id="9606.ENSP00000350098"/>
<dbReference type="iPTMnet" id="Q969H6"/>
<dbReference type="PhosphoSitePlus" id="Q969H6"/>
<dbReference type="BioMuta" id="POP5"/>
<dbReference type="DMDM" id="74731042"/>
<dbReference type="jPOST" id="Q969H6"/>
<dbReference type="MassIVE" id="Q969H6"/>
<dbReference type="PaxDb" id="9606-ENSP00000350098"/>
<dbReference type="PeptideAtlas" id="Q969H6"/>
<dbReference type="ProteomicsDB" id="75765">
    <molecule id="Q969H6-1"/>
</dbReference>
<dbReference type="ProteomicsDB" id="75766">
    <molecule id="Q969H6-2"/>
</dbReference>
<dbReference type="Pumba" id="Q969H6"/>
<dbReference type="Antibodypedia" id="45552">
    <property type="antibodies" value="52 antibodies from 18 providers"/>
</dbReference>
<dbReference type="DNASU" id="51367"/>
<dbReference type="Ensembl" id="ENST00000341039.6">
    <molecule id="Q969H6-2"/>
    <property type="protein sequence ID" value="ENSP00000341791.2"/>
    <property type="gene ID" value="ENSG00000167272.11"/>
</dbReference>
<dbReference type="Ensembl" id="ENST00000357500.5">
    <molecule id="Q969H6-1"/>
    <property type="protein sequence ID" value="ENSP00000350098.4"/>
    <property type="gene ID" value="ENSG00000167272.11"/>
</dbReference>
<dbReference type="GeneID" id="51367"/>
<dbReference type="KEGG" id="hsa:51367"/>
<dbReference type="MANE-Select" id="ENST00000357500.5">
    <property type="protein sequence ID" value="ENSP00000350098.4"/>
    <property type="RefSeq nucleotide sequence ID" value="NM_015918.4"/>
    <property type="RefSeq protein sequence ID" value="NP_057002.2"/>
</dbReference>
<dbReference type="UCSC" id="uc001tys.3">
    <molecule id="Q969H6-1"/>
    <property type="organism name" value="human"/>
</dbReference>
<dbReference type="AGR" id="HGNC:17689"/>
<dbReference type="CTD" id="51367"/>
<dbReference type="DisGeNET" id="51367"/>
<dbReference type="GeneCards" id="POP5"/>
<dbReference type="HGNC" id="HGNC:17689">
    <property type="gene designation" value="POP5"/>
</dbReference>
<dbReference type="HPA" id="ENSG00000167272">
    <property type="expression patterns" value="Low tissue specificity"/>
</dbReference>
<dbReference type="MIM" id="609992">
    <property type="type" value="gene"/>
</dbReference>
<dbReference type="neXtProt" id="NX_Q969H6"/>
<dbReference type="OpenTargets" id="ENSG00000167272"/>
<dbReference type="PharmGKB" id="PA128394660"/>
<dbReference type="VEuPathDB" id="HostDB:ENSG00000167272"/>
<dbReference type="eggNOG" id="KOG4639">
    <property type="taxonomic scope" value="Eukaryota"/>
</dbReference>
<dbReference type="GeneTree" id="ENSGT00390000012331"/>
<dbReference type="HOGENOM" id="CLU_2132628_0_0_1"/>
<dbReference type="InParanoid" id="Q969H6"/>
<dbReference type="OMA" id="MQNYLDK"/>
<dbReference type="OrthoDB" id="24745at2759"/>
<dbReference type="PAN-GO" id="Q969H6">
    <property type="GO annotations" value="4 GO annotations based on evolutionary models"/>
</dbReference>
<dbReference type="PhylomeDB" id="Q969H6"/>
<dbReference type="TreeFam" id="TF317496"/>
<dbReference type="BRENDA" id="3.1.26.5">
    <property type="organism ID" value="2681"/>
</dbReference>
<dbReference type="PathwayCommons" id="Q969H6"/>
<dbReference type="Reactome" id="R-HSA-6784531">
    <property type="pathway name" value="tRNA processing in the nucleus"/>
</dbReference>
<dbReference type="SignaLink" id="Q969H6"/>
<dbReference type="BioGRID-ORCS" id="51367">
    <property type="hits" value="797 hits in 1164 CRISPR screens"/>
</dbReference>
<dbReference type="ChiTaRS" id="POP5">
    <property type="organism name" value="human"/>
</dbReference>
<dbReference type="GeneWiki" id="POP5"/>
<dbReference type="GenomeRNAi" id="51367"/>
<dbReference type="Pharos" id="Q969H6">
    <property type="development level" value="Tbio"/>
</dbReference>
<dbReference type="PRO" id="PR:Q969H6"/>
<dbReference type="Proteomes" id="UP000005640">
    <property type="component" value="Chromosome 12"/>
</dbReference>
<dbReference type="RNAct" id="Q969H6">
    <property type="molecule type" value="protein"/>
</dbReference>
<dbReference type="Bgee" id="ENSG00000167272">
    <property type="expression patterns" value="Expressed in mucosa of transverse colon and 205 other cell types or tissues"/>
</dbReference>
<dbReference type="GO" id="GO:0030681">
    <property type="term" value="C:multimeric ribonuclease P complex"/>
    <property type="evidence" value="ECO:0000314"/>
    <property type="project" value="UniProtKB"/>
</dbReference>
<dbReference type="GO" id="GO:0005655">
    <property type="term" value="C:nucleolar ribonuclease P complex"/>
    <property type="evidence" value="ECO:0007669"/>
    <property type="project" value="Ensembl"/>
</dbReference>
<dbReference type="GO" id="GO:0005730">
    <property type="term" value="C:nucleolus"/>
    <property type="evidence" value="ECO:0000314"/>
    <property type="project" value="UniProtKB"/>
</dbReference>
<dbReference type="GO" id="GO:0005654">
    <property type="term" value="C:nucleoplasm"/>
    <property type="evidence" value="ECO:0000304"/>
    <property type="project" value="Reactome"/>
</dbReference>
<dbReference type="GO" id="GO:0000172">
    <property type="term" value="C:ribonuclease MRP complex"/>
    <property type="evidence" value="ECO:0000314"/>
    <property type="project" value="FlyBase"/>
</dbReference>
<dbReference type="GO" id="GO:0004526">
    <property type="term" value="F:ribonuclease P activity"/>
    <property type="evidence" value="ECO:0007669"/>
    <property type="project" value="UniProtKB-EC"/>
</dbReference>
<dbReference type="GO" id="GO:0033204">
    <property type="term" value="F:ribonuclease P RNA binding"/>
    <property type="evidence" value="ECO:0000314"/>
    <property type="project" value="UniProtKB"/>
</dbReference>
<dbReference type="GO" id="GO:0006364">
    <property type="term" value="P:rRNA processing"/>
    <property type="evidence" value="ECO:0007669"/>
    <property type="project" value="UniProtKB-KW"/>
</dbReference>
<dbReference type="GO" id="GO:0001682">
    <property type="term" value="P:tRNA 5'-leader removal"/>
    <property type="evidence" value="ECO:0000314"/>
    <property type="project" value="UniProtKB"/>
</dbReference>
<dbReference type="FunFam" id="3.30.70.3250:FF:000001">
    <property type="entry name" value="Ribonuclease P/MRP protein subunit POP5"/>
    <property type="match status" value="1"/>
</dbReference>
<dbReference type="Gene3D" id="3.30.70.3250">
    <property type="entry name" value="Ribonuclease P, Pop5 subunit"/>
    <property type="match status" value="1"/>
</dbReference>
<dbReference type="InterPro" id="IPR002759">
    <property type="entry name" value="Pop5/Rpp14/Rnp2-like"/>
</dbReference>
<dbReference type="InterPro" id="IPR016819">
    <property type="entry name" value="RNase_P/MRP_POP5"/>
</dbReference>
<dbReference type="InterPro" id="IPR038085">
    <property type="entry name" value="Rnp2-like_sf"/>
</dbReference>
<dbReference type="PANTHER" id="PTHR48414">
    <property type="entry name" value="POP5 HOMOLOG, RIBONUCLEASE P_MRP SUBUNIT"/>
    <property type="match status" value="1"/>
</dbReference>
<dbReference type="PANTHER" id="PTHR48414:SF1">
    <property type="entry name" value="POP5 HOMOLOG, RIBONUCLEASE P_MRP SUBUNIT"/>
    <property type="match status" value="1"/>
</dbReference>
<dbReference type="Pfam" id="PF01900">
    <property type="entry name" value="RNase_P_Rpp14"/>
    <property type="match status" value="1"/>
</dbReference>
<dbReference type="PIRSF" id="PIRSF023803">
    <property type="entry name" value="Ribonuclease_P_prd"/>
    <property type="match status" value="1"/>
</dbReference>
<dbReference type="SUPFAM" id="SSF160350">
    <property type="entry name" value="Rnp2-like"/>
    <property type="match status" value="1"/>
</dbReference>
<keyword id="KW-0002">3D-structure</keyword>
<keyword id="KW-0025">Alternative splicing</keyword>
<keyword id="KW-0539">Nucleus</keyword>
<keyword id="KW-0597">Phosphoprotein</keyword>
<keyword id="KW-1267">Proteomics identification</keyword>
<keyword id="KW-1185">Reference proteome</keyword>
<keyword id="KW-0694">RNA-binding</keyword>
<keyword id="KW-0698">rRNA processing</keyword>
<keyword id="KW-0819">tRNA processing</keyword>
<protein>
    <recommendedName>
        <fullName>Ribonuclease P/MRP protein subunit POP5</fullName>
        <shortName>hPop5</shortName>
    </recommendedName>
</protein>
<accession>Q969H6</accession>
<accession>A6NL80</accession>
<accession>Q53FS5</accession>
<accession>Q9Y2Q6</accession>
<evidence type="ECO:0000269" key="1">
    <source>
    </source>
</evidence>
<evidence type="ECO:0000269" key="2">
    <source>
    </source>
</evidence>
<evidence type="ECO:0000269" key="3">
    <source>
    </source>
</evidence>
<evidence type="ECO:0000269" key="4">
    <source>
    </source>
</evidence>
<evidence type="ECO:0000269" key="5">
    <source>
    </source>
</evidence>
<evidence type="ECO:0000303" key="6">
    <source>
    </source>
</evidence>
<evidence type="ECO:0000305" key="7"/>
<evidence type="ECO:0007744" key="8">
    <source>
        <dbReference type="PDB" id="6AHR"/>
    </source>
</evidence>
<evidence type="ECO:0007744" key="9">
    <source>
        <dbReference type="PDB" id="6AHU"/>
    </source>
</evidence>
<evidence type="ECO:0007744" key="10">
    <source>
    </source>
</evidence>
<evidence type="ECO:0007744" key="11">
    <source>
    </source>
</evidence>
<evidence type="ECO:0007744" key="12">
    <source>
    </source>
</evidence>
<evidence type="ECO:0007744" key="13">
    <source>
    </source>
</evidence>
<reference key="1">
    <citation type="journal article" date="2001" name="J. Biol. Chem.">
        <title>hPop5, a protein subunit of the human RNase MRP and RNase P endoribonucleases.</title>
        <authorList>
            <person name="van Eenennaam H."/>
            <person name="Lugtenberg D."/>
            <person name="Vogelzangs J.H.P."/>
            <person name="van Venrooij W.J."/>
            <person name="Pruijn G.J.M."/>
        </authorList>
    </citation>
    <scope>NUCLEOTIDE SEQUENCE [MRNA] (ISOFORM 1)</scope>
    <scope>FUNCTION</scope>
    <scope>SUBUNIT</scope>
    <scope>SUBCELLULAR LOCATION</scope>
</reference>
<reference key="2">
    <citation type="journal article" date="2000" name="Proc. Natl. Acad. Sci. U.S.A.">
        <title>Gene expression profiling in the human hypothalamus-pituitary-adrenal axis and full-length cDNA cloning.</title>
        <authorList>
            <person name="Hu R.-M."/>
            <person name="Han Z.-G."/>
            <person name="Song H.-D."/>
            <person name="Peng Y.-D."/>
            <person name="Huang Q.-H."/>
            <person name="Ren S.-X."/>
            <person name="Gu Y.-J."/>
            <person name="Huang C.-H."/>
            <person name="Li Y.-B."/>
            <person name="Jiang C.-L."/>
            <person name="Fu G."/>
            <person name="Zhang Q.-H."/>
            <person name="Gu B.-W."/>
            <person name="Dai M."/>
            <person name="Mao Y.-F."/>
            <person name="Gao G.-F."/>
            <person name="Rong R."/>
            <person name="Ye M."/>
            <person name="Zhou J."/>
            <person name="Xu S.-H."/>
            <person name="Gu J."/>
            <person name="Shi J.-X."/>
            <person name="Jin W.-R."/>
            <person name="Zhang C.-K."/>
            <person name="Wu T.-M."/>
            <person name="Huang G.-Y."/>
            <person name="Chen Z."/>
            <person name="Chen M.-D."/>
            <person name="Chen J.-L."/>
        </authorList>
    </citation>
    <scope>NUCLEOTIDE SEQUENCE [LARGE SCALE MRNA] (ISOFORM 1)</scope>
    <source>
        <tissue>Adrenal gland</tissue>
    </source>
</reference>
<reference key="3">
    <citation type="journal article" date="2000" name="Genome Res.">
        <title>Cloning and functional analysis of cDNAs with open reading frames for 300 previously undefined genes expressed in CD34+ hematopoietic stem/progenitor cells.</title>
        <authorList>
            <person name="Zhang Q.-H."/>
            <person name="Ye M."/>
            <person name="Wu X.-Y."/>
            <person name="Ren S.-X."/>
            <person name="Zhao M."/>
            <person name="Zhao C.-J."/>
            <person name="Fu G."/>
            <person name="Shen Y."/>
            <person name="Fan H.-Y."/>
            <person name="Lu G."/>
            <person name="Zhong M."/>
            <person name="Xu X.-R."/>
            <person name="Han Z.-G."/>
            <person name="Zhang J.-W."/>
            <person name="Tao J."/>
            <person name="Huang Q.-H."/>
            <person name="Zhou J."/>
            <person name="Hu G.-X."/>
            <person name="Gu J."/>
            <person name="Chen S.-J."/>
            <person name="Chen Z."/>
        </authorList>
    </citation>
    <scope>NUCLEOTIDE SEQUENCE [LARGE SCALE MRNA] (ISOFORM 1)</scope>
    <source>
        <tissue>Umbilical cord blood</tissue>
    </source>
</reference>
<reference key="4">
    <citation type="journal article" date="2004" name="Nat. Genet.">
        <title>Complete sequencing and characterization of 21,243 full-length human cDNAs.</title>
        <authorList>
            <person name="Ota T."/>
            <person name="Suzuki Y."/>
            <person name="Nishikawa T."/>
            <person name="Otsuki T."/>
            <person name="Sugiyama T."/>
            <person name="Irie R."/>
            <person name="Wakamatsu A."/>
            <person name="Hayashi K."/>
            <person name="Sato H."/>
            <person name="Nagai K."/>
            <person name="Kimura K."/>
            <person name="Makita H."/>
            <person name="Sekine M."/>
            <person name="Obayashi M."/>
            <person name="Nishi T."/>
            <person name="Shibahara T."/>
            <person name="Tanaka T."/>
            <person name="Ishii S."/>
            <person name="Yamamoto J."/>
            <person name="Saito K."/>
            <person name="Kawai Y."/>
            <person name="Isono Y."/>
            <person name="Nakamura Y."/>
            <person name="Nagahari K."/>
            <person name="Murakami K."/>
            <person name="Yasuda T."/>
            <person name="Iwayanagi T."/>
            <person name="Wagatsuma M."/>
            <person name="Shiratori A."/>
            <person name="Sudo H."/>
            <person name="Hosoiri T."/>
            <person name="Kaku Y."/>
            <person name="Kodaira H."/>
            <person name="Kondo H."/>
            <person name="Sugawara M."/>
            <person name="Takahashi M."/>
            <person name="Kanda K."/>
            <person name="Yokoi T."/>
            <person name="Furuya T."/>
            <person name="Kikkawa E."/>
            <person name="Omura Y."/>
            <person name="Abe K."/>
            <person name="Kamihara K."/>
            <person name="Katsuta N."/>
            <person name="Sato K."/>
            <person name="Tanikawa M."/>
            <person name="Yamazaki M."/>
            <person name="Ninomiya K."/>
            <person name="Ishibashi T."/>
            <person name="Yamashita H."/>
            <person name="Murakawa K."/>
            <person name="Fujimori K."/>
            <person name="Tanai H."/>
            <person name="Kimata M."/>
            <person name="Watanabe M."/>
            <person name="Hiraoka S."/>
            <person name="Chiba Y."/>
            <person name="Ishida S."/>
            <person name="Ono Y."/>
            <person name="Takiguchi S."/>
            <person name="Watanabe S."/>
            <person name="Yosida M."/>
            <person name="Hotuta T."/>
            <person name="Kusano J."/>
            <person name="Kanehori K."/>
            <person name="Takahashi-Fujii A."/>
            <person name="Hara H."/>
            <person name="Tanase T.-O."/>
            <person name="Nomura Y."/>
            <person name="Togiya S."/>
            <person name="Komai F."/>
            <person name="Hara R."/>
            <person name="Takeuchi K."/>
            <person name="Arita M."/>
            <person name="Imose N."/>
            <person name="Musashino K."/>
            <person name="Yuuki H."/>
            <person name="Oshima A."/>
            <person name="Sasaki N."/>
            <person name="Aotsuka S."/>
            <person name="Yoshikawa Y."/>
            <person name="Matsunawa H."/>
            <person name="Ichihara T."/>
            <person name="Shiohata N."/>
            <person name="Sano S."/>
            <person name="Moriya S."/>
            <person name="Momiyama H."/>
            <person name="Satoh N."/>
            <person name="Takami S."/>
            <person name="Terashima Y."/>
            <person name="Suzuki O."/>
            <person name="Nakagawa S."/>
            <person name="Senoh A."/>
            <person name="Mizoguchi H."/>
            <person name="Goto Y."/>
            <person name="Shimizu F."/>
            <person name="Wakebe H."/>
            <person name="Hishigaki H."/>
            <person name="Watanabe T."/>
            <person name="Sugiyama A."/>
            <person name="Takemoto M."/>
            <person name="Kawakami B."/>
            <person name="Yamazaki M."/>
            <person name="Watanabe K."/>
            <person name="Kumagai A."/>
            <person name="Itakura S."/>
            <person name="Fukuzumi Y."/>
            <person name="Fujimori Y."/>
            <person name="Komiyama M."/>
            <person name="Tashiro H."/>
            <person name="Tanigami A."/>
            <person name="Fujiwara T."/>
            <person name="Ono T."/>
            <person name="Yamada K."/>
            <person name="Fujii Y."/>
            <person name="Ozaki K."/>
            <person name="Hirao M."/>
            <person name="Ohmori Y."/>
            <person name="Kawabata A."/>
            <person name="Hikiji T."/>
            <person name="Kobatake N."/>
            <person name="Inagaki H."/>
            <person name="Ikema Y."/>
            <person name="Okamoto S."/>
            <person name="Okitani R."/>
            <person name="Kawakami T."/>
            <person name="Noguchi S."/>
            <person name="Itoh T."/>
            <person name="Shigeta K."/>
            <person name="Senba T."/>
            <person name="Matsumura K."/>
            <person name="Nakajima Y."/>
            <person name="Mizuno T."/>
            <person name="Morinaga M."/>
            <person name="Sasaki M."/>
            <person name="Togashi T."/>
            <person name="Oyama M."/>
            <person name="Hata H."/>
            <person name="Watanabe M."/>
            <person name="Komatsu T."/>
            <person name="Mizushima-Sugano J."/>
            <person name="Satoh T."/>
            <person name="Shirai Y."/>
            <person name="Takahashi Y."/>
            <person name="Nakagawa K."/>
            <person name="Okumura K."/>
            <person name="Nagase T."/>
            <person name="Nomura N."/>
            <person name="Kikuchi H."/>
            <person name="Masuho Y."/>
            <person name="Yamashita R."/>
            <person name="Nakai K."/>
            <person name="Yada T."/>
            <person name="Nakamura Y."/>
            <person name="Ohara O."/>
            <person name="Isogai T."/>
            <person name="Sugano S."/>
        </authorList>
    </citation>
    <scope>NUCLEOTIDE SEQUENCE [LARGE SCALE MRNA] (ISOFORM 2)</scope>
    <source>
        <tissue>Thymus</tissue>
    </source>
</reference>
<reference key="5">
    <citation type="submission" date="2005-04" db="EMBL/GenBank/DDBJ databases">
        <authorList>
            <person name="Suzuki Y."/>
            <person name="Sugano S."/>
            <person name="Totoki Y."/>
            <person name="Toyoda A."/>
            <person name="Takeda T."/>
            <person name="Sakaki Y."/>
            <person name="Tanaka A."/>
            <person name="Yokoyama S."/>
        </authorList>
    </citation>
    <scope>NUCLEOTIDE SEQUENCE [LARGE SCALE MRNA] (ISOFORM 1)</scope>
    <source>
        <tissue>Kidney proximal tubule</tissue>
    </source>
</reference>
<reference key="6">
    <citation type="journal article" date="2006" name="Nature">
        <title>The finished DNA sequence of human chromosome 12.</title>
        <authorList>
            <person name="Scherer S.E."/>
            <person name="Muzny D.M."/>
            <person name="Buhay C.J."/>
            <person name="Chen R."/>
            <person name="Cree A."/>
            <person name="Ding Y."/>
            <person name="Dugan-Rocha S."/>
            <person name="Gill R."/>
            <person name="Gunaratne P."/>
            <person name="Harris R.A."/>
            <person name="Hawes A.C."/>
            <person name="Hernandez J."/>
            <person name="Hodgson A.V."/>
            <person name="Hume J."/>
            <person name="Jackson A."/>
            <person name="Khan Z.M."/>
            <person name="Kovar-Smith C."/>
            <person name="Lewis L.R."/>
            <person name="Lozado R.J."/>
            <person name="Metzker M.L."/>
            <person name="Milosavljevic A."/>
            <person name="Miner G.R."/>
            <person name="Montgomery K.T."/>
            <person name="Morgan M.B."/>
            <person name="Nazareth L.V."/>
            <person name="Scott G."/>
            <person name="Sodergren E."/>
            <person name="Song X.-Z."/>
            <person name="Steffen D."/>
            <person name="Lovering R.C."/>
            <person name="Wheeler D.A."/>
            <person name="Worley K.C."/>
            <person name="Yuan Y."/>
            <person name="Zhang Z."/>
            <person name="Adams C.Q."/>
            <person name="Ansari-Lari M.A."/>
            <person name="Ayele M."/>
            <person name="Brown M.J."/>
            <person name="Chen G."/>
            <person name="Chen Z."/>
            <person name="Clerc-Blankenburg K.P."/>
            <person name="Davis C."/>
            <person name="Delgado O."/>
            <person name="Dinh H.H."/>
            <person name="Draper H."/>
            <person name="Gonzalez-Garay M.L."/>
            <person name="Havlak P."/>
            <person name="Jackson L.R."/>
            <person name="Jacob L.S."/>
            <person name="Kelly S.H."/>
            <person name="Li L."/>
            <person name="Li Z."/>
            <person name="Liu J."/>
            <person name="Liu W."/>
            <person name="Lu J."/>
            <person name="Maheshwari M."/>
            <person name="Nguyen B.-V."/>
            <person name="Okwuonu G.O."/>
            <person name="Pasternak S."/>
            <person name="Perez L.M."/>
            <person name="Plopper F.J.H."/>
            <person name="Santibanez J."/>
            <person name="Shen H."/>
            <person name="Tabor P.E."/>
            <person name="Verduzco D."/>
            <person name="Waldron L."/>
            <person name="Wang Q."/>
            <person name="Williams G.A."/>
            <person name="Zhang J."/>
            <person name="Zhou J."/>
            <person name="Allen C.C."/>
            <person name="Amin A.G."/>
            <person name="Anyalebechi V."/>
            <person name="Bailey M."/>
            <person name="Barbaria J.A."/>
            <person name="Bimage K.E."/>
            <person name="Bryant N.P."/>
            <person name="Burch P.E."/>
            <person name="Burkett C.E."/>
            <person name="Burrell K.L."/>
            <person name="Calderon E."/>
            <person name="Cardenas V."/>
            <person name="Carter K."/>
            <person name="Casias K."/>
            <person name="Cavazos I."/>
            <person name="Cavazos S.R."/>
            <person name="Ceasar H."/>
            <person name="Chacko J."/>
            <person name="Chan S.N."/>
            <person name="Chavez D."/>
            <person name="Christopoulos C."/>
            <person name="Chu J."/>
            <person name="Cockrell R."/>
            <person name="Cox C.D."/>
            <person name="Dang M."/>
            <person name="Dathorne S.R."/>
            <person name="David R."/>
            <person name="Davis C.M."/>
            <person name="Davy-Carroll L."/>
            <person name="Deshazo D.R."/>
            <person name="Donlin J.E."/>
            <person name="D'Souza L."/>
            <person name="Eaves K.A."/>
            <person name="Egan A."/>
            <person name="Emery-Cohen A.J."/>
            <person name="Escotto M."/>
            <person name="Flagg N."/>
            <person name="Forbes L.D."/>
            <person name="Gabisi A.M."/>
            <person name="Garza M."/>
            <person name="Hamilton C."/>
            <person name="Henderson N."/>
            <person name="Hernandez O."/>
            <person name="Hines S."/>
            <person name="Hogues M.E."/>
            <person name="Huang M."/>
            <person name="Idlebird D.G."/>
            <person name="Johnson R."/>
            <person name="Jolivet A."/>
            <person name="Jones S."/>
            <person name="Kagan R."/>
            <person name="King L.M."/>
            <person name="Leal B."/>
            <person name="Lebow H."/>
            <person name="Lee S."/>
            <person name="LeVan J.M."/>
            <person name="Lewis L.C."/>
            <person name="London P."/>
            <person name="Lorensuhewa L.M."/>
            <person name="Loulseged H."/>
            <person name="Lovett D.A."/>
            <person name="Lucier A."/>
            <person name="Lucier R.L."/>
            <person name="Ma J."/>
            <person name="Madu R.C."/>
            <person name="Mapua P."/>
            <person name="Martindale A.D."/>
            <person name="Martinez E."/>
            <person name="Massey E."/>
            <person name="Mawhiney S."/>
            <person name="Meador M.G."/>
            <person name="Mendez S."/>
            <person name="Mercado C."/>
            <person name="Mercado I.C."/>
            <person name="Merritt C.E."/>
            <person name="Miner Z.L."/>
            <person name="Minja E."/>
            <person name="Mitchell T."/>
            <person name="Mohabbat F."/>
            <person name="Mohabbat K."/>
            <person name="Montgomery B."/>
            <person name="Moore N."/>
            <person name="Morris S."/>
            <person name="Munidasa M."/>
            <person name="Ngo R.N."/>
            <person name="Nguyen N.B."/>
            <person name="Nickerson E."/>
            <person name="Nwaokelemeh O.O."/>
            <person name="Nwokenkwo S."/>
            <person name="Obregon M."/>
            <person name="Oguh M."/>
            <person name="Oragunye N."/>
            <person name="Oviedo R.J."/>
            <person name="Parish B.J."/>
            <person name="Parker D.N."/>
            <person name="Parrish J."/>
            <person name="Parks K.L."/>
            <person name="Paul H.A."/>
            <person name="Payton B.A."/>
            <person name="Perez A."/>
            <person name="Perrin W."/>
            <person name="Pickens A."/>
            <person name="Primus E.L."/>
            <person name="Pu L.-L."/>
            <person name="Puazo M."/>
            <person name="Quiles M.M."/>
            <person name="Quiroz J.B."/>
            <person name="Rabata D."/>
            <person name="Reeves K."/>
            <person name="Ruiz S.J."/>
            <person name="Shao H."/>
            <person name="Sisson I."/>
            <person name="Sonaike T."/>
            <person name="Sorelle R.P."/>
            <person name="Sutton A.E."/>
            <person name="Svatek A.F."/>
            <person name="Svetz L.A."/>
            <person name="Tamerisa K.S."/>
            <person name="Taylor T.R."/>
            <person name="Teague B."/>
            <person name="Thomas N."/>
            <person name="Thorn R.D."/>
            <person name="Trejos Z.Y."/>
            <person name="Trevino B.K."/>
            <person name="Ukegbu O.N."/>
            <person name="Urban J.B."/>
            <person name="Vasquez L.I."/>
            <person name="Vera V.A."/>
            <person name="Villasana D.M."/>
            <person name="Wang L."/>
            <person name="Ward-Moore S."/>
            <person name="Warren J.T."/>
            <person name="Wei X."/>
            <person name="White F."/>
            <person name="Williamson A.L."/>
            <person name="Wleczyk R."/>
            <person name="Wooden H.S."/>
            <person name="Wooden S.H."/>
            <person name="Yen J."/>
            <person name="Yoon L."/>
            <person name="Yoon V."/>
            <person name="Zorrilla S.E."/>
            <person name="Nelson D."/>
            <person name="Kucherlapati R."/>
            <person name="Weinstock G."/>
            <person name="Gibbs R.A."/>
        </authorList>
    </citation>
    <scope>NUCLEOTIDE SEQUENCE [LARGE SCALE GENOMIC DNA]</scope>
</reference>
<reference key="7">
    <citation type="submission" date="2005-07" db="EMBL/GenBank/DDBJ databases">
        <authorList>
            <person name="Mural R.J."/>
            <person name="Istrail S."/>
            <person name="Sutton G."/>
            <person name="Florea L."/>
            <person name="Halpern A.L."/>
            <person name="Mobarry C.M."/>
            <person name="Lippert R."/>
            <person name="Walenz B."/>
            <person name="Shatkay H."/>
            <person name="Dew I."/>
            <person name="Miller J.R."/>
            <person name="Flanigan M.J."/>
            <person name="Edwards N.J."/>
            <person name="Bolanos R."/>
            <person name="Fasulo D."/>
            <person name="Halldorsson B.V."/>
            <person name="Hannenhalli S."/>
            <person name="Turner R."/>
            <person name="Yooseph S."/>
            <person name="Lu F."/>
            <person name="Nusskern D.R."/>
            <person name="Shue B.C."/>
            <person name="Zheng X.H."/>
            <person name="Zhong F."/>
            <person name="Delcher A.L."/>
            <person name="Huson D.H."/>
            <person name="Kravitz S.A."/>
            <person name="Mouchard L."/>
            <person name="Reinert K."/>
            <person name="Remington K.A."/>
            <person name="Clark A.G."/>
            <person name="Waterman M.S."/>
            <person name="Eichler E.E."/>
            <person name="Adams M.D."/>
            <person name="Hunkapiller M.W."/>
            <person name="Myers E.W."/>
            <person name="Venter J.C."/>
        </authorList>
    </citation>
    <scope>NUCLEOTIDE SEQUENCE [LARGE SCALE GENOMIC DNA]</scope>
</reference>
<reference key="8">
    <citation type="journal article" date="2004" name="Genome Res.">
        <title>The status, quality, and expansion of the NIH full-length cDNA project: the Mammalian Gene Collection (MGC).</title>
        <authorList>
            <consortium name="The MGC Project Team"/>
        </authorList>
    </citation>
    <scope>NUCLEOTIDE SEQUENCE [LARGE SCALE MRNA] (ISOFORM 1)</scope>
    <source>
        <tissue>Mammary gland</tissue>
    </source>
</reference>
<reference key="9">
    <citation type="journal article" date="2004" name="Nucleic Acids Res.">
        <title>Mutual interactions between subunits of the human RNase MRP ribonucleoprotein complex.</title>
        <authorList>
            <person name="Welting T.J."/>
            <person name="van Venrooij W.J."/>
            <person name="Pruijn G.J."/>
        </authorList>
    </citation>
    <scope>IDENTIFICATION IN THE RNASE P AND RNASE MRP COMPLEXES</scope>
    <scope>SUBUNIT</scope>
</reference>
<reference key="10">
    <citation type="journal article" date="2006" name="Cell">
        <title>Global, in vivo, and site-specific phosphorylation dynamics in signaling networks.</title>
        <authorList>
            <person name="Olsen J.V."/>
            <person name="Blagoev B."/>
            <person name="Gnad F."/>
            <person name="Macek B."/>
            <person name="Kumar C."/>
            <person name="Mortensen P."/>
            <person name="Mann M."/>
        </authorList>
    </citation>
    <scope>PHOSPHORYLATION [LARGE SCALE ANALYSIS] AT SER-154</scope>
    <scope>IDENTIFICATION BY MASS SPECTROMETRY [LARGE SCALE ANALYSIS]</scope>
    <source>
        <tissue>Cervix carcinoma</tissue>
    </source>
</reference>
<reference key="11">
    <citation type="journal article" date="2008" name="Mol. Cell">
        <title>Kinase-selective enrichment enables quantitative phosphoproteomics of the kinome across the cell cycle.</title>
        <authorList>
            <person name="Daub H."/>
            <person name="Olsen J.V."/>
            <person name="Bairlein M."/>
            <person name="Gnad F."/>
            <person name="Oppermann F.S."/>
            <person name="Korner R."/>
            <person name="Greff Z."/>
            <person name="Keri G."/>
            <person name="Stemmann O."/>
            <person name="Mann M."/>
        </authorList>
    </citation>
    <scope>PHOSPHORYLATION [LARGE SCALE ANALYSIS] AT SER-154</scope>
    <scope>IDENTIFICATION BY MASS SPECTROMETRY [LARGE SCALE ANALYSIS]</scope>
    <source>
        <tissue>Cervix carcinoma</tissue>
    </source>
</reference>
<reference key="12">
    <citation type="journal article" date="2006" name="RNA">
        <title>Differential association of protein subunits with the human RNase MRP and RNase P complexes.</title>
        <authorList>
            <person name="Welting T.J."/>
            <person name="Kikkert B.J."/>
            <person name="van Venrooij W.J."/>
            <person name="Pruijn G.J."/>
        </authorList>
    </citation>
    <scope>IDENTIFICATION IN RNASE P AND MRP COMPLEXES</scope>
    <scope>SUBUNIT</scope>
</reference>
<reference key="13">
    <citation type="journal article" date="2008" name="Proc. Natl. Acad. Sci. U.S.A.">
        <title>A quantitative atlas of mitotic phosphorylation.</title>
        <authorList>
            <person name="Dephoure N."/>
            <person name="Zhou C."/>
            <person name="Villen J."/>
            <person name="Beausoleil S.A."/>
            <person name="Bakalarski C.E."/>
            <person name="Elledge S.J."/>
            <person name="Gygi S.P."/>
        </authorList>
    </citation>
    <scope>PHOSPHORYLATION [LARGE SCALE ANALYSIS] AT SER-154</scope>
    <scope>IDENTIFICATION BY MASS SPECTROMETRY [LARGE SCALE ANALYSIS]</scope>
    <source>
        <tissue>Cervix carcinoma</tissue>
    </source>
</reference>
<reference key="14">
    <citation type="journal article" date="2009" name="Anal. Chem.">
        <title>Lys-N and trypsin cover complementary parts of the phosphoproteome in a refined SCX-based approach.</title>
        <authorList>
            <person name="Gauci S."/>
            <person name="Helbig A.O."/>
            <person name="Slijper M."/>
            <person name="Krijgsveld J."/>
            <person name="Heck A.J."/>
            <person name="Mohammed S."/>
        </authorList>
    </citation>
    <scope>IDENTIFICATION BY MASS SPECTROMETRY [LARGE SCALE ANALYSIS]</scope>
</reference>
<reference key="15">
    <citation type="journal article" date="2011" name="BMC Syst. Biol.">
        <title>Initial characterization of the human central proteome.</title>
        <authorList>
            <person name="Burkard T.R."/>
            <person name="Planyavsky M."/>
            <person name="Kaupe I."/>
            <person name="Breitwieser F.P."/>
            <person name="Buerckstuemmer T."/>
            <person name="Bennett K.L."/>
            <person name="Superti-Furga G."/>
            <person name="Colinge J."/>
        </authorList>
    </citation>
    <scope>IDENTIFICATION BY MASS SPECTROMETRY [LARGE SCALE ANALYSIS]</scope>
</reference>
<reference key="16">
    <citation type="journal article" date="2011" name="Sci. Signal.">
        <title>System-wide temporal characterization of the proteome and phosphoproteome of human embryonic stem cell differentiation.</title>
        <authorList>
            <person name="Rigbolt K.T."/>
            <person name="Prokhorova T.A."/>
            <person name="Akimov V."/>
            <person name="Henningsen J."/>
            <person name="Johansen P.T."/>
            <person name="Kratchmarova I."/>
            <person name="Kassem M."/>
            <person name="Mann M."/>
            <person name="Olsen J.V."/>
            <person name="Blagoev B."/>
        </authorList>
    </citation>
    <scope>PHOSPHORYLATION [LARGE SCALE ANALYSIS] AT SER-154</scope>
    <scope>IDENTIFICATION BY MASS SPECTROMETRY [LARGE SCALE ANALYSIS]</scope>
</reference>
<reference key="17">
    <citation type="journal article" date="2017" name="Genes Dev.">
        <title>Targeted CRISPR disruption reveals a role for RNase MRP RNA in human preribosomal RNA processing.</title>
        <authorList>
            <person name="Goldfarb K.C."/>
            <person name="Cech T.R."/>
        </authorList>
    </citation>
    <scope>FUNCTION</scope>
</reference>
<reference evidence="8 9" key="18">
    <citation type="journal article" date="2018" name="Cell">
        <title>Cryo-EM Structure of the Human Ribonuclease P Holoenzyme.</title>
        <authorList>
            <person name="Wu J."/>
            <person name="Niu S."/>
            <person name="Tan M."/>
            <person name="Huang C."/>
            <person name="Li M."/>
            <person name="Song Y."/>
            <person name="Wang Q."/>
            <person name="Chen J."/>
            <person name="Shi S."/>
            <person name="Lan P."/>
            <person name="Lei M."/>
        </authorList>
    </citation>
    <scope>STRUCTURE BY ELECTRON MICROSCOPY (3.66 ANGSTROMS) OF RNASE P HOLOENZYME IN COMPLEX WITH TRNA</scope>
    <scope>FUNCTION</scope>
    <scope>SUBUNIT</scope>
</reference>
<feature type="chain" id="PRO_0000239007" description="Ribonuclease P/MRP protein subunit POP5">
    <location>
        <begin position="1"/>
        <end position="163"/>
    </location>
</feature>
<feature type="modified residue" description="Phosphoserine" evidence="10 11 12 13">
    <location>
        <position position="154"/>
    </location>
</feature>
<feature type="splice variant" id="VSP_042733" description="In isoform 2." evidence="6">
    <location>
        <begin position="55"/>
        <end position="104"/>
    </location>
</feature>
<feature type="sequence conflict" description="In Ref. 2; AAF17213 and 3; AAD20966." evidence="7" ref="2 3">
    <original>AA</original>
    <variation>P</variation>
    <location>
        <begin position="47"/>
        <end position="48"/>
    </location>
</feature>
<feature type="sequence conflict" description="In Ref. 5; BAD96926." evidence="7" ref="5">
    <original>N</original>
    <variation>D</variation>
    <location>
        <position position="99"/>
    </location>
</feature>
<feature type="sequence conflict" description="In Ref. 5; BAD96926." evidence="7" ref="5">
    <original>H</original>
    <variation>R</variation>
    <location>
        <position position="102"/>
    </location>
</feature>
<name>POP5_HUMAN</name>